<comment type="function">
    <text evidence="1 2">This enzyme catalyzes the hydrolysis of the N-terminal peptide bond of an N-acetylated peptide to generate an N-acetylated amino acid and a peptide with a free N-terminus (By similarity). It preferentially cleaves off Ac-Ala, Ac-Met and Ac-Ser (By similarity). Also, involved in the degradation of oxidized and glycated proteins (By similarity).</text>
</comment>
<comment type="catalytic activity">
    <reaction evidence="1">
        <text>Cleavage of an N-acetyl or N-formyl amino acid from the N-terminus of a polypeptide.</text>
        <dbReference type="EC" id="3.4.19.1"/>
    </reaction>
</comment>
<comment type="activity regulation">
    <text evidence="3">Homotetramerization is required for activity. Tetramerization results in the formation of a gated channel which is involved in substrate selection and substrate access to the catalytic sites.</text>
</comment>
<comment type="subunit">
    <text evidence="4">Homotetramer.</text>
</comment>
<comment type="subcellular location">
    <subcellularLocation>
        <location evidence="2">Cytoplasm</location>
    </subcellularLocation>
</comment>
<comment type="alternative products">
    <event type="alternative splicing"/>
    <isoform>
        <id>Q8R146-1</id>
        <name>1</name>
        <sequence type="displayed"/>
    </isoform>
    <isoform>
        <id>Q8R146-2</id>
        <name>2</name>
        <sequence type="described" ref="VSP_008866"/>
    </isoform>
</comment>
<comment type="similarity">
    <text evidence="7">Belongs to the peptidase S9C family.</text>
</comment>
<sequence length="732" mass="81581">MERQVLLSEPQEAAALYRGLSRQPSLSAACLGPEVTTQYGGLYRTVHTEWTQRDLDRMENIRFCRQYLVFHDGDSVVFAGPAGNSVETRGELLSRESPSGTMKAVLRKAGGAVSGEEKQFLEVWEKNRKLKSFNLSALEKHGPVYEDDCFGCLSWSHSETHLLYVAEKKRPKAESFFQTKALDVSASDEEMARPKKPDQAIKGDQFVFYEDWGETMVSKSIPVLCVLDIESGNISVLEGVPENVSPGQAFWAPGDTGVVFVGWWHEPFRLGIRYCTNRRSALYYVDLSGGKCELLSDESLAVCSPRLSPDQCRVVYLQYPSLAPHHQCSQLFLYDWYTKVTSLVVDIVPRQLGESFSGIYCSLLPLGCWSADSQRVVFDSVQRSRQDLFAVDTQTGSVTSLTAGGSAGSWKLLTIDRDLMVAQFSTPNLPPSLKVGFLPPAGKEQSVSWVSLEEAEPIPDIHWGIRVLHPPPDQENVQYADLDFEAILLQPSNSPDKSQVPMVVMPHGGPHSSFVTAWMLFPAMLCKMGFAVLLVNYRGSTGFGQDSILSLPGNVGHQDVKDVQFAVQQVLQEEHFDARRVALMGGSHGGFLSCHLIGQYPETYSACIARNPVINIVSMMGTTDIPDWCMVETGFPYSNDYLPDLNVLEEMLDKSPIKYIPQVKTPVLLMLGQEDRRVPFKQGLEYYHALKARNVPVRLLLYPKSTHALSEVEVESDSFMNTVLWLHTHLGS</sequence>
<keyword id="KW-0007">Acetylation</keyword>
<keyword id="KW-0025">Alternative splicing</keyword>
<keyword id="KW-0963">Cytoplasm</keyword>
<keyword id="KW-0378">Hydrolase</keyword>
<keyword id="KW-0597">Phosphoprotein</keyword>
<keyword id="KW-1185">Reference proteome</keyword>
<proteinExistence type="evidence at protein level"/>
<feature type="chain" id="PRO_0000122431" description="Acylamino-acid-releasing enzyme">
    <location>
        <begin position="1"/>
        <end position="732"/>
    </location>
</feature>
<feature type="active site" description="Charge relay system" evidence="5">
    <location>
        <position position="587"/>
    </location>
</feature>
<feature type="active site" description="Charge relay system" evidence="5">
    <location>
        <position position="675"/>
    </location>
</feature>
<feature type="active site" description="Charge relay system" evidence="5">
    <location>
        <position position="707"/>
    </location>
</feature>
<feature type="modified residue" description="N-acetylmethionine" evidence="2">
    <location>
        <position position="1"/>
    </location>
</feature>
<feature type="modified residue" description="Phosphoserine" evidence="2">
    <location>
        <position position="185"/>
    </location>
</feature>
<feature type="modified residue" description="Phosphoserine" evidence="8">
    <location>
        <position position="187"/>
    </location>
</feature>
<feature type="splice variant" id="VSP_008866" description="In isoform 2." evidence="6">
    <location>
        <begin position="508"/>
        <end position="522"/>
    </location>
</feature>
<feature type="sequence conflict" description="In Ref. 3; AAH25494." evidence="7" ref="3">
    <original>R</original>
    <variation>P</variation>
    <location>
        <position position="89"/>
    </location>
</feature>
<name>ACPH_MOUSE</name>
<dbReference type="EC" id="3.4.19.1" evidence="2"/>
<dbReference type="EMBL" id="AC137678">
    <property type="status" value="NOT_ANNOTATED_CDS"/>
    <property type="molecule type" value="Genomic_DNA"/>
</dbReference>
<dbReference type="EMBL" id="CH466560">
    <property type="protein sequence ID" value="EDL21266.1"/>
    <property type="molecule type" value="Genomic_DNA"/>
</dbReference>
<dbReference type="EMBL" id="BC025494">
    <property type="protein sequence ID" value="AAH25494.1"/>
    <property type="molecule type" value="mRNA"/>
</dbReference>
<dbReference type="EMBL" id="BC026594">
    <property type="protein sequence ID" value="AAH26594.1"/>
    <property type="molecule type" value="mRNA"/>
</dbReference>
<dbReference type="EMBL" id="BC034199">
    <property type="protein sequence ID" value="AAH34199.1"/>
    <property type="molecule type" value="mRNA"/>
</dbReference>
<dbReference type="CCDS" id="CCDS52923.1">
    <molecule id="Q8R146-1"/>
</dbReference>
<dbReference type="RefSeq" id="NP_001397427.1">
    <molecule id="Q8R146-2"/>
    <property type="nucleotide sequence ID" value="NM_001410498.1"/>
</dbReference>
<dbReference type="RefSeq" id="NP_666338.2">
    <molecule id="Q8R146-1"/>
    <property type="nucleotide sequence ID" value="NM_146226.3"/>
</dbReference>
<dbReference type="SMR" id="Q8R146"/>
<dbReference type="BioGRID" id="231690">
    <property type="interactions" value="17"/>
</dbReference>
<dbReference type="FunCoup" id="Q8R146">
    <property type="interactions" value="1942"/>
</dbReference>
<dbReference type="STRING" id="10090.ENSMUSP00000141856"/>
<dbReference type="ChEMBL" id="CHEMBL2189142"/>
<dbReference type="ESTHER" id="mouse-apeh">
    <property type="family name" value="ACPH_Peptidase_S9"/>
</dbReference>
<dbReference type="MEROPS" id="S09.004"/>
<dbReference type="GlyGen" id="Q8R146">
    <property type="glycosylation" value="1 site, 1 N-linked glycan (1 site)"/>
</dbReference>
<dbReference type="iPTMnet" id="Q8R146"/>
<dbReference type="PhosphoSitePlus" id="Q8R146"/>
<dbReference type="SwissPalm" id="Q8R146"/>
<dbReference type="jPOST" id="Q8R146"/>
<dbReference type="PaxDb" id="10090-ENSMUSP00000080058"/>
<dbReference type="PeptideAtlas" id="Q8R146"/>
<dbReference type="ProteomicsDB" id="296059">
    <molecule id="Q8R146-1"/>
</dbReference>
<dbReference type="ProteomicsDB" id="296060">
    <molecule id="Q8R146-2"/>
</dbReference>
<dbReference type="Pumba" id="Q8R146"/>
<dbReference type="Antibodypedia" id="30567">
    <property type="antibodies" value="243 antibodies from 29 providers"/>
</dbReference>
<dbReference type="DNASU" id="235606"/>
<dbReference type="Ensembl" id="ENSMUST00000193254.6">
    <molecule id="Q8R146-1"/>
    <property type="protein sequence ID" value="ENSMUSP00000141856.2"/>
    <property type="gene ID" value="ENSMUSG00000032590.15"/>
</dbReference>
<dbReference type="GeneID" id="235606"/>
<dbReference type="KEGG" id="mmu:235606"/>
<dbReference type="UCSC" id="uc009ros.2">
    <molecule id="Q8R146-2"/>
    <property type="organism name" value="mouse"/>
</dbReference>
<dbReference type="UCSC" id="uc009rot.2">
    <molecule id="Q8R146-1"/>
    <property type="organism name" value="mouse"/>
</dbReference>
<dbReference type="AGR" id="MGI:88041"/>
<dbReference type="CTD" id="327"/>
<dbReference type="MGI" id="MGI:88041">
    <property type="gene designation" value="Apeh"/>
</dbReference>
<dbReference type="VEuPathDB" id="HostDB:ENSMUSG00000032590"/>
<dbReference type="eggNOG" id="KOG2100">
    <property type="taxonomic scope" value="Eukaryota"/>
</dbReference>
<dbReference type="GeneTree" id="ENSGT00390000013172"/>
<dbReference type="HOGENOM" id="CLU_014230_1_1_1"/>
<dbReference type="InParanoid" id="Q8R146"/>
<dbReference type="OMA" id="QEIATPF"/>
<dbReference type="OrthoDB" id="416344at2759"/>
<dbReference type="PhylomeDB" id="Q8R146"/>
<dbReference type="TreeFam" id="TF312937"/>
<dbReference type="Reactome" id="R-MMU-6798695">
    <property type="pathway name" value="Neutrophil degranulation"/>
</dbReference>
<dbReference type="Reactome" id="R-MMU-72764">
    <property type="pathway name" value="Eukaryotic Translation Termination"/>
</dbReference>
<dbReference type="BioGRID-ORCS" id="235606">
    <property type="hits" value="5 hits in 77 CRISPR screens"/>
</dbReference>
<dbReference type="ChiTaRS" id="Apeh">
    <property type="organism name" value="mouse"/>
</dbReference>
<dbReference type="PRO" id="PR:Q8R146"/>
<dbReference type="Proteomes" id="UP000000589">
    <property type="component" value="Chromosome 9"/>
</dbReference>
<dbReference type="RNAct" id="Q8R146">
    <property type="molecule type" value="protein"/>
</dbReference>
<dbReference type="Bgee" id="ENSMUSG00000032590">
    <property type="expression patterns" value="Expressed in fetal liver hematopoietic progenitor cell and 247 other cell types or tissues"/>
</dbReference>
<dbReference type="ExpressionAtlas" id="Q8R146">
    <property type="expression patterns" value="baseline and differential"/>
</dbReference>
<dbReference type="GO" id="GO:0005829">
    <property type="term" value="C:cytosol"/>
    <property type="evidence" value="ECO:0007669"/>
    <property type="project" value="Ensembl"/>
</dbReference>
<dbReference type="GO" id="GO:0031965">
    <property type="term" value="C:nuclear membrane"/>
    <property type="evidence" value="ECO:0007669"/>
    <property type="project" value="Ensembl"/>
</dbReference>
<dbReference type="GO" id="GO:0042802">
    <property type="term" value="F:identical protein binding"/>
    <property type="evidence" value="ECO:0007669"/>
    <property type="project" value="Ensembl"/>
</dbReference>
<dbReference type="GO" id="GO:0008242">
    <property type="term" value="F:omega peptidase activity"/>
    <property type="evidence" value="ECO:0007669"/>
    <property type="project" value="UniProtKB-EC"/>
</dbReference>
<dbReference type="GO" id="GO:0004252">
    <property type="term" value="F:serine-type endopeptidase activity"/>
    <property type="evidence" value="ECO:0007669"/>
    <property type="project" value="Ensembl"/>
</dbReference>
<dbReference type="GO" id="GO:0050435">
    <property type="term" value="P:amyloid-beta metabolic process"/>
    <property type="evidence" value="ECO:0007669"/>
    <property type="project" value="Ensembl"/>
</dbReference>
<dbReference type="GO" id="GO:0006508">
    <property type="term" value="P:proteolysis"/>
    <property type="evidence" value="ECO:0007669"/>
    <property type="project" value="Ensembl"/>
</dbReference>
<dbReference type="FunFam" id="2.120.10.30:FF:000047">
    <property type="entry name" value="Acylamino-acid-releasing enzyme"/>
    <property type="match status" value="1"/>
</dbReference>
<dbReference type="FunFam" id="3.40.50.1820:FF:000043">
    <property type="entry name" value="acylamino-acid-releasing enzyme"/>
    <property type="match status" value="1"/>
</dbReference>
<dbReference type="Gene3D" id="3.40.50.1820">
    <property type="entry name" value="alpha/beta hydrolase"/>
    <property type="match status" value="1"/>
</dbReference>
<dbReference type="Gene3D" id="2.120.10.30">
    <property type="entry name" value="TolB, C-terminal domain"/>
    <property type="match status" value="1"/>
</dbReference>
<dbReference type="InterPro" id="IPR011042">
    <property type="entry name" value="6-blade_b-propeller_TolB-like"/>
</dbReference>
<dbReference type="InterPro" id="IPR045550">
    <property type="entry name" value="AARE_N"/>
</dbReference>
<dbReference type="InterPro" id="IPR029058">
    <property type="entry name" value="AB_hydrolase_fold"/>
</dbReference>
<dbReference type="InterPro" id="IPR002471">
    <property type="entry name" value="Pept_S9_AS"/>
</dbReference>
<dbReference type="InterPro" id="IPR001375">
    <property type="entry name" value="Peptidase_S9_cat"/>
</dbReference>
<dbReference type="PANTHER" id="PTHR42776:SF4">
    <property type="entry name" value="ACYLAMINO-ACID-RELEASING ENZYME"/>
    <property type="match status" value="1"/>
</dbReference>
<dbReference type="PANTHER" id="PTHR42776">
    <property type="entry name" value="SERINE PEPTIDASE S9 FAMILY MEMBER"/>
    <property type="match status" value="1"/>
</dbReference>
<dbReference type="Pfam" id="PF19283">
    <property type="entry name" value="APEH_N"/>
    <property type="match status" value="1"/>
</dbReference>
<dbReference type="Pfam" id="PF00326">
    <property type="entry name" value="Peptidase_S9"/>
    <property type="match status" value="1"/>
</dbReference>
<dbReference type="SUPFAM" id="SSF53474">
    <property type="entry name" value="alpha/beta-Hydrolases"/>
    <property type="match status" value="1"/>
</dbReference>
<dbReference type="SUPFAM" id="SSF50993">
    <property type="entry name" value="Peptidase/esterase 'gauge' domain"/>
    <property type="match status" value="1"/>
</dbReference>
<dbReference type="PROSITE" id="PS00708">
    <property type="entry name" value="PRO_ENDOPEP_SER"/>
    <property type="match status" value="1"/>
</dbReference>
<evidence type="ECO:0000250" key="1">
    <source>
        <dbReference type="UniProtKB" id="P13676"/>
    </source>
</evidence>
<evidence type="ECO:0000250" key="2">
    <source>
        <dbReference type="UniProtKB" id="P13798"/>
    </source>
</evidence>
<evidence type="ECO:0000250" key="3">
    <source>
        <dbReference type="UniProtKB" id="P19205"/>
    </source>
</evidence>
<evidence type="ECO:0000250" key="4">
    <source>
        <dbReference type="UniProtKB" id="P80227"/>
    </source>
</evidence>
<evidence type="ECO:0000255" key="5">
    <source>
        <dbReference type="PROSITE-ProRule" id="PRU10084"/>
    </source>
</evidence>
<evidence type="ECO:0000303" key="6">
    <source>
    </source>
</evidence>
<evidence type="ECO:0000305" key="7"/>
<evidence type="ECO:0007744" key="8">
    <source>
    </source>
</evidence>
<organism>
    <name type="scientific">Mus musculus</name>
    <name type="common">Mouse</name>
    <dbReference type="NCBI Taxonomy" id="10090"/>
    <lineage>
        <taxon>Eukaryota</taxon>
        <taxon>Metazoa</taxon>
        <taxon>Chordata</taxon>
        <taxon>Craniata</taxon>
        <taxon>Vertebrata</taxon>
        <taxon>Euteleostomi</taxon>
        <taxon>Mammalia</taxon>
        <taxon>Eutheria</taxon>
        <taxon>Euarchontoglires</taxon>
        <taxon>Glires</taxon>
        <taxon>Rodentia</taxon>
        <taxon>Myomorpha</taxon>
        <taxon>Muroidea</taxon>
        <taxon>Muridae</taxon>
        <taxon>Murinae</taxon>
        <taxon>Mus</taxon>
        <taxon>Mus</taxon>
    </lineage>
</organism>
<accession>Q8R146</accession>
<accession>G3X9I2</accession>
<accession>Q8K029</accession>
<accession>Q8R0M9</accession>
<reference key="1">
    <citation type="journal article" date="2009" name="PLoS Biol.">
        <title>Lineage-specific biology revealed by a finished genome assembly of the mouse.</title>
        <authorList>
            <person name="Church D.M."/>
            <person name="Goodstadt L."/>
            <person name="Hillier L.W."/>
            <person name="Zody M.C."/>
            <person name="Goldstein S."/>
            <person name="She X."/>
            <person name="Bult C.J."/>
            <person name="Agarwala R."/>
            <person name="Cherry J.L."/>
            <person name="DiCuccio M."/>
            <person name="Hlavina W."/>
            <person name="Kapustin Y."/>
            <person name="Meric P."/>
            <person name="Maglott D."/>
            <person name="Birtle Z."/>
            <person name="Marques A.C."/>
            <person name="Graves T."/>
            <person name="Zhou S."/>
            <person name="Teague B."/>
            <person name="Potamousis K."/>
            <person name="Churas C."/>
            <person name="Place M."/>
            <person name="Herschleb J."/>
            <person name="Runnheim R."/>
            <person name="Forrest D."/>
            <person name="Amos-Landgraf J."/>
            <person name="Schwartz D.C."/>
            <person name="Cheng Z."/>
            <person name="Lindblad-Toh K."/>
            <person name="Eichler E.E."/>
            <person name="Ponting C.P."/>
        </authorList>
    </citation>
    <scope>NUCLEOTIDE SEQUENCE [LARGE SCALE GENOMIC DNA]</scope>
    <source>
        <strain>C57BL/6J</strain>
    </source>
</reference>
<reference key="2">
    <citation type="submission" date="2005-07" db="EMBL/GenBank/DDBJ databases">
        <authorList>
            <person name="Mural R.J."/>
            <person name="Adams M.D."/>
            <person name="Myers E.W."/>
            <person name="Smith H.O."/>
            <person name="Venter J.C."/>
        </authorList>
    </citation>
    <scope>NUCLEOTIDE SEQUENCE [LARGE SCALE GENOMIC DNA]</scope>
</reference>
<reference key="3">
    <citation type="journal article" date="2004" name="Genome Res.">
        <title>The status, quality, and expansion of the NIH full-length cDNA project: the Mammalian Gene Collection (MGC).</title>
        <authorList>
            <consortium name="The MGC Project Team"/>
        </authorList>
    </citation>
    <scope>NUCLEOTIDE SEQUENCE [LARGE SCALE MRNA] (ISOFORMS 1 AND 2)</scope>
    <source>
        <tissue>Colon</tissue>
        <tissue>Kidney</tissue>
        <tissue>Liver</tissue>
    </source>
</reference>
<reference key="4">
    <citation type="journal article" date="2010" name="Cell">
        <title>A tissue-specific atlas of mouse protein phosphorylation and expression.</title>
        <authorList>
            <person name="Huttlin E.L."/>
            <person name="Jedrychowski M.P."/>
            <person name="Elias J.E."/>
            <person name="Goswami T."/>
            <person name="Rad R."/>
            <person name="Beausoleil S.A."/>
            <person name="Villen J."/>
            <person name="Haas W."/>
            <person name="Sowa M.E."/>
            <person name="Gygi S.P."/>
        </authorList>
    </citation>
    <scope>PHOSPHORYLATION [LARGE SCALE ANALYSIS] AT SER-187</scope>
    <scope>IDENTIFICATION BY MASS SPECTROMETRY [LARGE SCALE ANALYSIS]</scope>
    <source>
        <tissue>Brain</tissue>
        <tissue>Brown adipose tissue</tissue>
        <tissue>Heart</tissue>
        <tissue>Kidney</tissue>
        <tissue>Liver</tissue>
        <tissue>Lung</tissue>
        <tissue>Pancreas</tissue>
        <tissue>Spleen</tissue>
        <tissue>Testis</tissue>
    </source>
</reference>
<gene>
    <name type="primary">Apeh</name>
</gene>
<protein>
    <recommendedName>
        <fullName>Acylamino-acid-releasing enzyme</fullName>
        <shortName>AARE</shortName>
        <ecNumber evidence="2">3.4.19.1</ecNumber>
    </recommendedName>
    <alternativeName>
        <fullName>Acyl-peptide hydrolase</fullName>
        <shortName>APH</shortName>
    </alternativeName>
    <alternativeName>
        <fullName>Acylaminoacyl-peptidase</fullName>
    </alternativeName>
</protein>